<accession>Q6F2E3</accession>
<evidence type="ECO:0000250" key="1">
    <source>
        <dbReference type="UniProtKB" id="P78414"/>
    </source>
</evidence>
<evidence type="ECO:0000250" key="2">
    <source>
        <dbReference type="UniProtKB" id="Q9YGK8"/>
    </source>
</evidence>
<evidence type="ECO:0000255" key="3"/>
<evidence type="ECO:0000255" key="4">
    <source>
        <dbReference type="PROSITE-ProRule" id="PRU00108"/>
    </source>
</evidence>
<evidence type="ECO:0000256" key="5">
    <source>
        <dbReference type="SAM" id="MobiDB-lite"/>
    </source>
</evidence>
<evidence type="ECO:0000269" key="6">
    <source>
    </source>
</evidence>
<evidence type="ECO:0000305" key="7"/>
<evidence type="ECO:0000312" key="8">
    <source>
        <dbReference type="EMBL" id="AAT72003.1"/>
    </source>
</evidence>
<reference evidence="8" key="1">
    <citation type="submission" date="2004-07" db="EMBL/GenBank/DDBJ databases">
        <title>Sequence of Xenopus tropicalis development genes.</title>
        <authorList>
            <person name="Qin S."/>
            <person name="Dors M."/>
            <person name="Johnson E."/>
            <person name="Bloom S."/>
            <person name="Hood L."/>
            <person name="Rowen L."/>
        </authorList>
    </citation>
    <scope>NUCLEOTIDE SEQUENCE [GENOMIC DNA]</scope>
</reference>
<reference evidence="7" key="2">
    <citation type="journal article" date="2009" name="Dev. Biol.">
        <title>The Xenopus Irx genes are essential for neural patterning and define the border between prethalamus and thalamus through mutual antagonism with the anterior repressors Fezf and Arx.</title>
        <authorList>
            <person name="Rodriguez-Seguel E."/>
            <person name="Alarcon P."/>
            <person name="Gomez-Skarmeta J.L."/>
        </authorList>
    </citation>
    <scope>FUNCTION</scope>
    <scope>TISSUE SPECIFICITY</scope>
</reference>
<dbReference type="EMBL" id="AC149069">
    <property type="protein sequence ID" value="AAT72003.1"/>
    <property type="molecule type" value="Genomic_DNA"/>
</dbReference>
<dbReference type="RefSeq" id="NP_001188351.1">
    <property type="nucleotide sequence ID" value="NM_001201422.1"/>
</dbReference>
<dbReference type="SMR" id="Q6F2E3"/>
<dbReference type="FunCoup" id="Q6F2E3">
    <property type="interactions" value="402"/>
</dbReference>
<dbReference type="STRING" id="8364.ENSXETP00000016574"/>
<dbReference type="PaxDb" id="8364-ENSXETP00000061991"/>
<dbReference type="GeneID" id="100038208"/>
<dbReference type="KEGG" id="xtr:100038208"/>
<dbReference type="AGR" id="Xenbase:XB-GENE-486817"/>
<dbReference type="CTD" id="79192"/>
<dbReference type="Xenbase" id="XB-GENE-486817">
    <property type="gene designation" value="irx1"/>
</dbReference>
<dbReference type="eggNOG" id="KOG0773">
    <property type="taxonomic scope" value="Eukaryota"/>
</dbReference>
<dbReference type="InParanoid" id="Q6F2E3"/>
<dbReference type="OMA" id="QVNHTST"/>
<dbReference type="OrthoDB" id="5399138at2759"/>
<dbReference type="PhylomeDB" id="Q6F2E3"/>
<dbReference type="Proteomes" id="UP000008143">
    <property type="component" value="Chromosome 6"/>
</dbReference>
<dbReference type="Bgee" id="ENSXETG00000006958">
    <property type="expression patterns" value="Expressed in heart and 31 other cell types or tissues"/>
</dbReference>
<dbReference type="GO" id="GO:0005634">
    <property type="term" value="C:nucleus"/>
    <property type="evidence" value="ECO:0000250"/>
    <property type="project" value="UniProtKB"/>
</dbReference>
<dbReference type="GO" id="GO:0000981">
    <property type="term" value="F:DNA-binding transcription factor activity, RNA polymerase II-specific"/>
    <property type="evidence" value="ECO:0007669"/>
    <property type="project" value="InterPro"/>
</dbReference>
<dbReference type="GO" id="GO:0000976">
    <property type="term" value="F:transcription cis-regulatory region binding"/>
    <property type="evidence" value="ECO:0000250"/>
    <property type="project" value="UniProtKB"/>
</dbReference>
<dbReference type="GO" id="GO:0007420">
    <property type="term" value="P:brain development"/>
    <property type="evidence" value="ECO:0000250"/>
    <property type="project" value="UniProtKB"/>
</dbReference>
<dbReference type="GO" id="GO:0001708">
    <property type="term" value="P:cell fate specification"/>
    <property type="evidence" value="ECO:0000250"/>
    <property type="project" value="UniProtKB"/>
</dbReference>
<dbReference type="GO" id="GO:0009953">
    <property type="term" value="P:dorsal/ventral pattern formation"/>
    <property type="evidence" value="ECO:0000250"/>
    <property type="project" value="UniProtKB"/>
</dbReference>
<dbReference type="GO" id="GO:0072005">
    <property type="term" value="P:maintenance of kidney identity"/>
    <property type="evidence" value="ECO:0000250"/>
    <property type="project" value="UniProtKB"/>
</dbReference>
<dbReference type="GO" id="GO:0007498">
    <property type="term" value="P:mesoderm development"/>
    <property type="evidence" value="ECO:0000250"/>
    <property type="project" value="UniProtKB"/>
</dbReference>
<dbReference type="GO" id="GO:0030917">
    <property type="term" value="P:midbrain-hindbrain boundary development"/>
    <property type="evidence" value="ECO:0000250"/>
    <property type="project" value="UniProtKB"/>
</dbReference>
<dbReference type="GO" id="GO:0030514">
    <property type="term" value="P:negative regulation of BMP signaling pathway"/>
    <property type="evidence" value="ECO:0000250"/>
    <property type="project" value="UniProtKB"/>
</dbReference>
<dbReference type="GO" id="GO:0045892">
    <property type="term" value="P:negative regulation of DNA-templated transcription"/>
    <property type="evidence" value="ECO:0000250"/>
    <property type="project" value="UniProtKB"/>
</dbReference>
<dbReference type="GO" id="GO:0000122">
    <property type="term" value="P:negative regulation of transcription by RNA polymerase II"/>
    <property type="evidence" value="ECO:0000250"/>
    <property type="project" value="UniProtKB"/>
</dbReference>
<dbReference type="GO" id="GO:0014036">
    <property type="term" value="P:neural crest cell fate specification"/>
    <property type="evidence" value="ECO:0000250"/>
    <property type="project" value="UniProtKB"/>
</dbReference>
<dbReference type="GO" id="GO:0022008">
    <property type="term" value="P:neurogenesis"/>
    <property type="evidence" value="ECO:0000250"/>
    <property type="project" value="UniProtKB"/>
</dbReference>
<dbReference type="GO" id="GO:0045893">
    <property type="term" value="P:positive regulation of DNA-templated transcription"/>
    <property type="evidence" value="ECO:0000250"/>
    <property type="project" value="UniProtKB"/>
</dbReference>
<dbReference type="GO" id="GO:0045944">
    <property type="term" value="P:positive regulation of transcription by RNA polymerase II"/>
    <property type="evidence" value="ECO:0000250"/>
    <property type="project" value="UniProtKB"/>
</dbReference>
<dbReference type="GO" id="GO:0009954">
    <property type="term" value="P:proximal/distal pattern formation"/>
    <property type="evidence" value="ECO:0000250"/>
    <property type="project" value="UniProtKB"/>
</dbReference>
<dbReference type="GO" id="GO:0072196">
    <property type="term" value="P:proximal/distal pattern formation involved in pronephric nephron development"/>
    <property type="evidence" value="ECO:0000250"/>
    <property type="project" value="UniProtKB"/>
</dbReference>
<dbReference type="GO" id="GO:0039005">
    <property type="term" value="P:specification of pronephric tubule identity"/>
    <property type="evidence" value="ECO:0000250"/>
    <property type="project" value="UniProtKB"/>
</dbReference>
<dbReference type="GO" id="GO:0060062">
    <property type="term" value="P:Spemann organizer formation at the dorsal lip of the blastopore"/>
    <property type="evidence" value="ECO:0000250"/>
    <property type="project" value="UniProtKB"/>
</dbReference>
<dbReference type="CDD" id="cd00086">
    <property type="entry name" value="homeodomain"/>
    <property type="match status" value="1"/>
</dbReference>
<dbReference type="FunFam" id="1.10.10.60:FF:000003">
    <property type="entry name" value="Iroquois-class homeobox protein IRX"/>
    <property type="match status" value="1"/>
</dbReference>
<dbReference type="Gene3D" id="1.10.10.60">
    <property type="entry name" value="Homeodomain-like"/>
    <property type="match status" value="1"/>
</dbReference>
<dbReference type="InterPro" id="IPR001356">
    <property type="entry name" value="HD"/>
</dbReference>
<dbReference type="InterPro" id="IPR017970">
    <property type="entry name" value="Homeobox_CS"/>
</dbReference>
<dbReference type="InterPro" id="IPR009057">
    <property type="entry name" value="Homeodomain-like_sf"/>
</dbReference>
<dbReference type="InterPro" id="IPR003893">
    <property type="entry name" value="Iroquois_homeo"/>
</dbReference>
<dbReference type="InterPro" id="IPR008422">
    <property type="entry name" value="KN_HD"/>
</dbReference>
<dbReference type="PANTHER" id="PTHR11211">
    <property type="entry name" value="IROQUOIS-CLASS HOMEODOMAIN PROTEIN IRX"/>
    <property type="match status" value="1"/>
</dbReference>
<dbReference type="PANTHER" id="PTHR11211:SF13">
    <property type="entry name" value="IROQUOIS-CLASS HOMEODOMAIN PROTEIN IRX-1"/>
    <property type="match status" value="1"/>
</dbReference>
<dbReference type="Pfam" id="PF05920">
    <property type="entry name" value="Homeobox_KN"/>
    <property type="match status" value="1"/>
</dbReference>
<dbReference type="SMART" id="SM00389">
    <property type="entry name" value="HOX"/>
    <property type="match status" value="1"/>
</dbReference>
<dbReference type="SMART" id="SM00548">
    <property type="entry name" value="IRO"/>
    <property type="match status" value="1"/>
</dbReference>
<dbReference type="SUPFAM" id="SSF46689">
    <property type="entry name" value="Homeodomain-like"/>
    <property type="match status" value="1"/>
</dbReference>
<dbReference type="PROSITE" id="PS00027">
    <property type="entry name" value="HOMEOBOX_1"/>
    <property type="match status" value="1"/>
</dbReference>
<dbReference type="PROSITE" id="PS50071">
    <property type="entry name" value="HOMEOBOX_2"/>
    <property type="match status" value="1"/>
</dbReference>
<organism>
    <name type="scientific">Xenopus tropicalis</name>
    <name type="common">Western clawed frog</name>
    <name type="synonym">Silurana tropicalis</name>
    <dbReference type="NCBI Taxonomy" id="8364"/>
    <lineage>
        <taxon>Eukaryota</taxon>
        <taxon>Metazoa</taxon>
        <taxon>Chordata</taxon>
        <taxon>Craniata</taxon>
        <taxon>Vertebrata</taxon>
        <taxon>Euteleostomi</taxon>
        <taxon>Amphibia</taxon>
        <taxon>Batrachia</taxon>
        <taxon>Anura</taxon>
        <taxon>Pipoidea</taxon>
        <taxon>Pipidae</taxon>
        <taxon>Xenopodinae</taxon>
        <taxon>Xenopus</taxon>
        <taxon>Silurana</taxon>
    </lineage>
</organism>
<proteinExistence type="evidence at transcript level"/>
<feature type="chain" id="PRO_0000388715" description="Iroquois-class homeodomain protein irx-1">
    <location>
        <begin position="1"/>
        <end position="467"/>
    </location>
</feature>
<feature type="DNA-binding region" description="Homeobox; TALE-type" evidence="4">
    <location>
        <begin position="126"/>
        <end position="188"/>
    </location>
</feature>
<feature type="region of interest" description="Disordered" evidence="5">
    <location>
        <begin position="198"/>
        <end position="307"/>
    </location>
</feature>
<feature type="region of interest" description="Disordered" evidence="5">
    <location>
        <begin position="319"/>
        <end position="342"/>
    </location>
</feature>
<feature type="region of interest" description="Disordered" evidence="5">
    <location>
        <begin position="410"/>
        <end position="467"/>
    </location>
</feature>
<feature type="compositionally biased region" description="Acidic residues" evidence="5">
    <location>
        <begin position="215"/>
        <end position="225"/>
    </location>
</feature>
<feature type="compositionally biased region" description="Acidic residues" evidence="5">
    <location>
        <begin position="233"/>
        <end position="244"/>
    </location>
</feature>
<feature type="compositionally biased region" description="Basic and acidic residues" evidence="5">
    <location>
        <begin position="245"/>
        <end position="262"/>
    </location>
</feature>
<feature type="compositionally biased region" description="Basic and acidic residues" evidence="5">
    <location>
        <begin position="415"/>
        <end position="431"/>
    </location>
</feature>
<feature type="compositionally biased region" description="Polar residues" evidence="5">
    <location>
        <begin position="447"/>
        <end position="460"/>
    </location>
</feature>
<gene>
    <name evidence="2" type="primary">irx1</name>
    <name evidence="8" type="synonym">iro1</name>
</gene>
<sequence>MSFPQLGYPQYLSAGQAAVYGGERPGVLAAAAAAAAAAAAAGSGRPTGADLGSSSTAAVTSVLGMYASPYSAPNYSAFLPYTTDLTLFSQMGSQYELKDNPGVHPATFAAHTTPGYYPYGQFQYGDPGRPKNATRESTSTLKAWLNEHRKNPYPTKGEKIMLAIITKMTLTQVSTWFANARRRLKKENKVTWGARSKEDDNIFGSDTEGDHEKNEDDEEIDLESIDIDKIDDNDGEQSNEEEDEKLEHLRQGEKESFKKESEVMIPSSDGLKSKDSLSLGKESSDTSNTRIVSPGGQGNIQVPPHNKPKIWSLAETATSPDGALKSSPPPSQANHTSPPIQHPAFLPSHGLYTCQIGKFHNWTNGAFLTQSSLINMRSLLGVNPHHVAHHNHHHLQAHQQAPLLATNLSSLSSDKTPERTSPKHSDRENLPRTESPPQLKPSFQAVRENTLSQQEGTSRILTALPSA</sequence>
<name>IRX1_XENTR</name>
<keyword id="KW-0010">Activator</keyword>
<keyword id="KW-0217">Developmental protein</keyword>
<keyword id="KW-0221">Differentiation</keyword>
<keyword id="KW-0238">DNA-binding</keyword>
<keyword id="KW-0371">Homeobox</keyword>
<keyword id="KW-0524">Neurogenesis</keyword>
<keyword id="KW-0539">Nucleus</keyword>
<keyword id="KW-1185">Reference proteome</keyword>
<keyword id="KW-0678">Repressor</keyword>
<keyword id="KW-0804">Transcription</keyword>
<keyword id="KW-0805">Transcription regulation</keyword>
<comment type="function">
    <text evidence="6">Acts partially redundantly with other irx members in neural patterning. Required for formation of the posterior forebrain, midbrain, hindbrain, and to a lesser extent, spinal cord. Acts early in neural plate development to induce expression of some but not all proneural genes, and specify a neural precursor state. Also up-regulates repressors that prevent neuronal differentiation. Patterns the neuroectoderm in both the anterior/posterior and dorsal/ventral axes. Acts primarily as a transcriptional repressor during neural development, and binds to the bmp4 promoter to repress gene expression and thus mediate down-regulation of bmp4 by wnt signaling. Controls multiple processes through bmp4-repression including neural plate development, neural crest specification and Spemann organizer development. Involved in the specification of the preplacodal field at the anterior border of the neural plate. Regulates the genetic cascade of interactions that are necessary for positioning the isthmus organizer and the formation of the midbrain-hindbrain boundary. Required during at least two stages of pronephros kidney development; during neurula stages, maintains transcription of key renal genes to define the size and identity of the pronephric anlage, probably in part through regulation of bmp-signaling. Subsequently required for proper formation of the intermediate tubule segment of the pronephros. Acts principally as a transcriptional activator during pronephros development.</text>
</comment>
<comment type="subcellular location">
    <subcellularLocation>
        <location evidence="3 7">Nucleus</location>
    </subcellularLocation>
</comment>
<comment type="tissue specificity">
    <text evidence="6">Expressed in the neural plate in overlapping patterns with other irx members, which all share an anterior border of expression. Also expressed in the mesoderm, placodes and notochord. Broadly expressed in the tailbud rhombencephalon (hindbrain). Outside the nervous system and at tailbud stages, expressed in the developing otic vesicle, branchial arches, prospective heart region and pronephros.</text>
</comment>
<comment type="similarity">
    <text evidence="3">Belongs to the TALE/IRO homeobox family.</text>
</comment>
<protein>
    <recommendedName>
        <fullName evidence="1">Iroquois-class homeodomain protein irx-1</fullName>
    </recommendedName>
    <alternativeName>
        <fullName evidence="1">Iroquois homeobox protein 1</fullName>
    </alternativeName>
</protein>